<keyword id="KW-0002">3D-structure</keyword>
<keyword id="KW-0256">Endoplasmic reticulum</keyword>
<keyword id="KW-0472">Membrane</keyword>
<keyword id="KW-1185">Reference proteome</keyword>
<keyword id="KW-0735">Signal-anchor</keyword>
<keyword id="KW-0812">Transmembrane</keyword>
<keyword id="KW-1133">Transmembrane helix</keyword>
<proteinExistence type="evidence at protein level"/>
<sequence>MITDVQLAIFANMLGVSLFLLVVLYHYVAVNNPKKQE</sequence>
<feature type="chain" id="PRO_0000328638" description="Dolichyl-diphosphooligosaccharide--protein glycosyltransferase subunit 4">
    <location>
        <begin position="1"/>
        <end position="37"/>
    </location>
</feature>
<feature type="topological domain" description="Lumenal" evidence="2">
    <location>
        <begin position="1"/>
        <end position="4"/>
    </location>
</feature>
<feature type="transmembrane region" description="Helical" evidence="2">
    <location>
        <begin position="5"/>
        <end position="25"/>
    </location>
</feature>
<feature type="topological domain" description="Cytoplasmic" evidence="2">
    <location>
        <begin position="26"/>
        <end position="37"/>
    </location>
</feature>
<feature type="mutagenesis site" description="Decreases interaction with STT3A, STT3B and RPN1." evidence="3">
    <original>V</original>
    <variation>K</variation>
    <location>
        <position position="23"/>
    </location>
</feature>
<feature type="helix" evidence="14">
    <location>
        <begin position="4"/>
        <end position="30"/>
    </location>
</feature>
<gene>
    <name evidence="9" type="primary">OST4</name>
</gene>
<accession>P0C6T2</accession>
<comment type="function">
    <text evidence="3 4">Subunit of the oligosaccharyl transferase (OST) complex that catalyzes the initial transfer of a defined glycan (Glc(3)Man(9)GlcNAc(2) in eukaryotes) from the lipid carrier dolichol-pyrophosphate to an asparagine residue within an Asn-X-Ser/Thr consensus motif in nascent polypeptide chains, the first step in protein N-glycosylation (PubMed:31831667). N-glycosylation occurs cotranslationally and the complex associates with the Sec61 complex at the channel-forming translocon complex that mediates protein translocation across the endoplasmic reticulum (ER). All subunits are required for a maximal enzyme activity. Specifically involved in maintaining stability of STT3A-containing OST complexes.</text>
</comment>
<comment type="pathway">
    <text evidence="4">Protein modification; protein glycosylation.</text>
</comment>
<comment type="subunit">
    <text evidence="1 3 4 5 6">Component of the oligosaccharyltransferase (OST) complex (PubMed:31831667, PubMed:36697828, PubMed:38670073). OST exists in two different complex forms which contain common core subunits RPN1, RPN2, OST48, OST4, DAD1 and TMEM258, either STT3A or STT3B as catalytic subunits, and form-specific accessory subunits (PubMed:23606741, PubMed:31831667, PubMed:36697828, PubMed:38670073). STT3A complex assembly occurs through the formation of 3 subcomplexes. Subcomplex 1 contains RPN1 and TMEM258, subcomplex 2 contains the STT3A-specific subunits STT3A, DC2/OSTC, and KCP2 as well as the core subunit OST4, and subcomplex 3 contains RPN2, DAD1, and OST48. The STT3A complex can form stable complexes with the Sec61 complex or with both the Sec61 and TRAP complexes (By similarity).</text>
</comment>
<comment type="interaction">
    <interactant intactId="EBI-18397963">
        <id>P0C6T2</id>
    </interactant>
    <interactant intactId="EBI-11991020">
        <id>A6NI15</id>
        <label>MSGN1</label>
    </interactant>
    <organismsDiffer>false</organismsDiffer>
    <experiments>3</experiments>
</comment>
<comment type="interaction">
    <interactant intactId="EBI-18397963">
        <id>P0C6T2</id>
    </interactant>
    <interactant intactId="EBI-741480">
        <id>Q9UMX0</id>
        <label>UBQLN1</label>
    </interactant>
    <organismsDiffer>false</organismsDiffer>
    <experiments>3</experiments>
</comment>
<comment type="subcellular location">
    <subcellularLocation>
        <location evidence="8">Endoplasmic reticulum</location>
    </subcellularLocation>
    <subcellularLocation>
        <location>Endoplasmic reticulum membrane</location>
        <topology evidence="7">Single-pass type III membrane protein</topology>
    </subcellularLocation>
    <text>The single transmembrane helix has a kink in the middle of the transmembrane span.</text>
</comment>
<comment type="similarity">
    <text evidence="7">Belongs to the OST4 family.</text>
</comment>
<protein>
    <recommendedName>
        <fullName evidence="7">Dolichyl-diphosphooligosaccharide--protein glycosyltransferase subunit 4</fullName>
    </recommendedName>
</protein>
<name>OST4_HUMAN</name>
<reference key="1">
    <citation type="journal article" date="2005" name="Nature">
        <title>Generation and annotation of the DNA sequences of human chromosomes 2 and 4.</title>
        <authorList>
            <person name="Hillier L.W."/>
            <person name="Graves T.A."/>
            <person name="Fulton R.S."/>
            <person name="Fulton L.A."/>
            <person name="Pepin K.H."/>
            <person name="Minx P."/>
            <person name="Wagner-McPherson C."/>
            <person name="Layman D."/>
            <person name="Wylie K."/>
            <person name="Sekhon M."/>
            <person name="Becker M.C."/>
            <person name="Fewell G.A."/>
            <person name="Delehaunty K.D."/>
            <person name="Miner T.L."/>
            <person name="Nash W.E."/>
            <person name="Kremitzki C."/>
            <person name="Oddy L."/>
            <person name="Du H."/>
            <person name="Sun H."/>
            <person name="Bradshaw-Cordum H."/>
            <person name="Ali J."/>
            <person name="Carter J."/>
            <person name="Cordes M."/>
            <person name="Harris A."/>
            <person name="Isak A."/>
            <person name="van Brunt A."/>
            <person name="Nguyen C."/>
            <person name="Du F."/>
            <person name="Courtney L."/>
            <person name="Kalicki J."/>
            <person name="Ozersky P."/>
            <person name="Abbott S."/>
            <person name="Armstrong J."/>
            <person name="Belter E.A."/>
            <person name="Caruso L."/>
            <person name="Cedroni M."/>
            <person name="Cotton M."/>
            <person name="Davidson T."/>
            <person name="Desai A."/>
            <person name="Elliott G."/>
            <person name="Erb T."/>
            <person name="Fronick C."/>
            <person name="Gaige T."/>
            <person name="Haakenson W."/>
            <person name="Haglund K."/>
            <person name="Holmes A."/>
            <person name="Harkins R."/>
            <person name="Kim K."/>
            <person name="Kruchowski S.S."/>
            <person name="Strong C.M."/>
            <person name="Grewal N."/>
            <person name="Goyea E."/>
            <person name="Hou S."/>
            <person name="Levy A."/>
            <person name="Martinka S."/>
            <person name="Mead K."/>
            <person name="McLellan M.D."/>
            <person name="Meyer R."/>
            <person name="Randall-Maher J."/>
            <person name="Tomlinson C."/>
            <person name="Dauphin-Kohlberg S."/>
            <person name="Kozlowicz-Reilly A."/>
            <person name="Shah N."/>
            <person name="Swearengen-Shahid S."/>
            <person name="Snider J."/>
            <person name="Strong J.T."/>
            <person name="Thompson J."/>
            <person name="Yoakum M."/>
            <person name="Leonard S."/>
            <person name="Pearman C."/>
            <person name="Trani L."/>
            <person name="Radionenko M."/>
            <person name="Waligorski J.E."/>
            <person name="Wang C."/>
            <person name="Rock S.M."/>
            <person name="Tin-Wollam A.-M."/>
            <person name="Maupin R."/>
            <person name="Latreille P."/>
            <person name="Wendl M.C."/>
            <person name="Yang S.-P."/>
            <person name="Pohl C."/>
            <person name="Wallis J.W."/>
            <person name="Spieth J."/>
            <person name="Bieri T.A."/>
            <person name="Berkowicz N."/>
            <person name="Nelson J.O."/>
            <person name="Osborne J."/>
            <person name="Ding L."/>
            <person name="Meyer R."/>
            <person name="Sabo A."/>
            <person name="Shotland Y."/>
            <person name="Sinha P."/>
            <person name="Wohldmann P.E."/>
            <person name="Cook L.L."/>
            <person name="Hickenbotham M.T."/>
            <person name="Eldred J."/>
            <person name="Williams D."/>
            <person name="Jones T.A."/>
            <person name="She X."/>
            <person name="Ciccarelli F.D."/>
            <person name="Izaurralde E."/>
            <person name="Taylor J."/>
            <person name="Schmutz J."/>
            <person name="Myers R.M."/>
            <person name="Cox D.R."/>
            <person name="Huang X."/>
            <person name="McPherson J.D."/>
            <person name="Mardis E.R."/>
            <person name="Clifton S.W."/>
            <person name="Warren W.C."/>
            <person name="Chinwalla A.T."/>
            <person name="Eddy S.R."/>
            <person name="Marra M.A."/>
            <person name="Ovcharenko I."/>
            <person name="Furey T.S."/>
            <person name="Miller W."/>
            <person name="Eichler E.E."/>
            <person name="Bork P."/>
            <person name="Suyama M."/>
            <person name="Torrents D."/>
            <person name="Waterston R.H."/>
            <person name="Wilson R.K."/>
        </authorList>
    </citation>
    <scope>NUCLEOTIDE SEQUENCE [LARGE SCALE GENOMIC DNA]</scope>
</reference>
<reference key="2">
    <citation type="journal article" date="2004" name="Genome Res.">
        <title>The status, quality, and expansion of the NIH full-length cDNA project: the Mammalian Gene Collection (MGC).</title>
        <authorList>
            <consortium name="The MGC Project Team"/>
        </authorList>
    </citation>
    <scope>NUCLEOTIDE SEQUENCE [LARGE SCALE MRNA]</scope>
</reference>
<reference key="3">
    <citation type="journal article" date="2013" name="J. Cell Sci.">
        <title>OST4 is a subunit of the mammalian oligosaccharyltransferase required for efficient N-glycosylation.</title>
        <authorList>
            <person name="Dumax-Vorzet A."/>
            <person name="Roboti P."/>
            <person name="High S."/>
        </authorList>
    </citation>
    <scope>FUNCTION</scope>
    <scope>IDENTIFICATION IN THE OLIGOSACCHARYLTRANSFERASE COMPLEX</scope>
    <scope>INTERACTION WITH STT3A; STT3A AND RPN1</scope>
    <scope>MUTAGENESIS OF VAL-23</scope>
    <scope>SUBCELLULAR LOCATION</scope>
</reference>
<reference key="4">
    <citation type="journal article" date="2011" name="Biochem. Biophys. Res. Commun.">
        <title>Solution structure of a human minimembrane protein Ost4, a subunit of the oligosaccharyltransferase complex.</title>
        <authorList>
            <person name="Gayen S."/>
            <person name="Kang C."/>
        </authorList>
    </citation>
    <scope>STRUCTURE BY NMR</scope>
    <scope>TRANSMEMBRANE DOMAIN</scope>
</reference>
<reference evidence="10 11" key="5">
    <citation type="journal article" date="2019" name="Science">
        <title>Cryo-electron microscopy structures of human oligosaccharyltransferase complexes OST-A and OST-B.</title>
        <authorList>
            <person name="Ramirez A.S."/>
            <person name="Kowal J."/>
            <person name="Locher K.P."/>
        </authorList>
    </citation>
    <scope>STRUCTURE BY ELECTRON MICROSCOPY (3.50 ANGSTROMS)</scope>
    <scope>IDENTIFICATION OF THE OLIGOSACCHARYLTRANSFERASE (OST) COMPLEX</scope>
    <scope>FUNCTION</scope>
    <scope>PATHWAY</scope>
</reference>
<reference evidence="12" key="6">
    <citation type="journal article" date="2023" name="Nature">
        <title>Visualization of translation and protein biogenesis at the ER membrane.</title>
        <authorList>
            <person name="Gemmer M."/>
            <person name="Chaillet M.L."/>
            <person name="van Loenhout J."/>
            <person name="Cuevas Arenas R."/>
            <person name="Vismpas D."/>
            <person name="Grollers-Mulderij M."/>
            <person name="Koh F.A."/>
            <person name="Albanese P."/>
            <person name="Scheltema R.A."/>
            <person name="Howes S.C."/>
            <person name="Kotecha A."/>
            <person name="Fedry J."/>
            <person name="Forster F."/>
        </authorList>
    </citation>
    <scope>STRUCTURE BY ELECTRON MICROSCOPY (7.60 ANGSTROMS) OF THE STT3A-CONTAINING OLIGOSACCHARYLTRANSFERASE (OST) AND TRANSLOCON COMPLEXES</scope>
    <scope>SUBUNIT</scope>
</reference>
<reference evidence="13" key="7">
    <citation type="journal article" date="2024" name="Cell">
        <title>Positive selection CRISPR screens reveal a druggable pocket in an oligosaccharyltransferase required for inflammatory signaling to NF-kappaB.</title>
        <authorList>
            <person name="Lampson B.L."/>
            <person name="Ramrez A.S."/>
            <person name="Baro M."/>
            <person name="He L."/>
            <person name="Hegde M."/>
            <person name="Koduri V."/>
            <person name="Pfaff J.L."/>
            <person name="Hanna R.E."/>
            <person name="Kowal J."/>
            <person name="Shirole N.H."/>
            <person name="He Y."/>
            <person name="Doench J.G."/>
            <person name="Contessa J.N."/>
            <person name="Locher K.P."/>
            <person name="Kaelin W.G."/>
        </authorList>
    </citation>
    <scope>STRUCTURE BY ELECTRON MICROSCOPY (3.61 ANGSTROMS) OF THE STT3A-CONTAINING OLIGOSACCHARYLTRANSFERASE (OST)</scope>
    <scope>SUBUNIT</scope>
</reference>
<dbReference type="EMBL" id="AC013403">
    <property type="status" value="NOT_ANNOTATED_CDS"/>
    <property type="molecule type" value="Genomic_DNA"/>
</dbReference>
<dbReference type="EMBL" id="BC015653">
    <property type="status" value="NOT_ANNOTATED_CDS"/>
    <property type="molecule type" value="mRNA"/>
</dbReference>
<dbReference type="CCDS" id="CCDS58703.1"/>
<dbReference type="RefSeq" id="NP_001128165.1">
    <property type="nucleotide sequence ID" value="NM_001134693.2"/>
</dbReference>
<dbReference type="PDB" id="2LAT">
    <property type="method" value="NMR"/>
    <property type="chains" value="A=1-37"/>
</dbReference>
<dbReference type="PDB" id="6S7O">
    <property type="method" value="EM"/>
    <property type="resolution" value="3.50 A"/>
    <property type="chains" value="B=1-37"/>
</dbReference>
<dbReference type="PDB" id="6S7T">
    <property type="method" value="EM"/>
    <property type="resolution" value="3.50 A"/>
    <property type="chains" value="B=1-37"/>
</dbReference>
<dbReference type="PDB" id="8B6L">
    <property type="method" value="EM"/>
    <property type="resolution" value="7.60 A"/>
    <property type="chains" value="K=1-37"/>
</dbReference>
<dbReference type="PDB" id="8PN9">
    <property type="method" value="EM"/>
    <property type="resolution" value="3.61 A"/>
    <property type="chains" value="B=1-37"/>
</dbReference>
<dbReference type="PDBsum" id="2LAT"/>
<dbReference type="PDBsum" id="6S7O"/>
<dbReference type="PDBsum" id="6S7T"/>
<dbReference type="PDBsum" id="8B6L"/>
<dbReference type="PDBsum" id="8PN9"/>
<dbReference type="BMRB" id="P0C6T2"/>
<dbReference type="EMDB" id="EMD-10110"/>
<dbReference type="EMDB" id="EMD-10112"/>
<dbReference type="EMDB" id="EMD-15870"/>
<dbReference type="EMDB" id="EMD-17779"/>
<dbReference type="SMR" id="P0C6T2"/>
<dbReference type="BioGRID" id="933663">
    <property type="interactions" value="108"/>
</dbReference>
<dbReference type="ComplexPortal" id="CPX-5621">
    <property type="entry name" value="Oligosaccharyltransferase complex A"/>
</dbReference>
<dbReference type="ComplexPortal" id="CPX-5622">
    <property type="entry name" value="Oligosaccharyltransferase complex B, MAGT1 variant"/>
</dbReference>
<dbReference type="ComplexPortal" id="CPX-8738">
    <property type="entry name" value="Oligosaccharyltransferase complex B, TUCS3 variant"/>
</dbReference>
<dbReference type="FunCoup" id="P0C6T2">
    <property type="interactions" value="151"/>
</dbReference>
<dbReference type="IntAct" id="P0C6T2">
    <property type="interactions" value="105"/>
</dbReference>
<dbReference type="STRING" id="9606.ENSP00000455716"/>
<dbReference type="TCDB" id="9.B.142.3.17">
    <property type="family name" value="the integral membrane glycosyltransferase family 39 (gt39) family"/>
</dbReference>
<dbReference type="BioMuta" id="OST4"/>
<dbReference type="DMDM" id="182894143"/>
<dbReference type="jPOST" id="P0C6T2"/>
<dbReference type="MassIVE" id="P0C6T2"/>
<dbReference type="PaxDb" id="9606-ENSP00000457935"/>
<dbReference type="PeptideAtlas" id="P0C6T2"/>
<dbReference type="TopDownProteomics" id="P0C6T2"/>
<dbReference type="Antibodypedia" id="64138">
    <property type="antibodies" value="13 antibodies from 8 providers"/>
</dbReference>
<dbReference type="DNASU" id="100128731"/>
<dbReference type="Ensembl" id="ENST00000429985.1">
    <property type="protein sequence ID" value="ENSP00000455716.1"/>
    <property type="gene ID" value="ENSG00000228474.6"/>
</dbReference>
<dbReference type="Ensembl" id="ENST00000447619.5">
    <property type="protein sequence ID" value="ENSP00000454411.1"/>
    <property type="gene ID" value="ENSG00000228474.6"/>
</dbReference>
<dbReference type="Ensembl" id="ENST00000456793.2">
    <property type="protein sequence ID" value="ENSP00000457935.1"/>
    <property type="gene ID" value="ENSG00000228474.6"/>
</dbReference>
<dbReference type="GeneID" id="100128731"/>
<dbReference type="KEGG" id="hsa:100128731"/>
<dbReference type="MANE-Select" id="ENST00000456793.2">
    <property type="protein sequence ID" value="ENSP00000457935.1"/>
    <property type="RefSeq nucleotide sequence ID" value="NM_001134693.2"/>
    <property type="RefSeq protein sequence ID" value="NP_001128165.1"/>
</dbReference>
<dbReference type="UCSC" id="uc002rig.4">
    <property type="organism name" value="human"/>
</dbReference>
<dbReference type="AGR" id="HGNC:32483"/>
<dbReference type="CTD" id="100128731"/>
<dbReference type="GeneCards" id="OST4"/>
<dbReference type="HGNC" id="HGNC:32483">
    <property type="gene designation" value="OST4"/>
</dbReference>
<dbReference type="HPA" id="ENSG00000228474">
    <property type="expression patterns" value="Low tissue specificity"/>
</dbReference>
<dbReference type="MIM" id="618932">
    <property type="type" value="gene"/>
</dbReference>
<dbReference type="neXtProt" id="NX_P0C6T2"/>
<dbReference type="OpenTargets" id="ENSG00000228474"/>
<dbReference type="PharmGKB" id="PA165697090"/>
<dbReference type="VEuPathDB" id="HostDB:ENSG00000228474"/>
<dbReference type="eggNOG" id="ENOG502TACH">
    <property type="taxonomic scope" value="Eukaryota"/>
</dbReference>
<dbReference type="GeneTree" id="ENSGT00390000016516"/>
<dbReference type="HOGENOM" id="CLU_186352_2_0_1"/>
<dbReference type="InParanoid" id="P0C6T2"/>
<dbReference type="OrthoDB" id="2124077at2759"/>
<dbReference type="PAN-GO" id="P0C6T2">
    <property type="GO annotations" value="2 GO annotations based on evolutionary models"/>
</dbReference>
<dbReference type="PhylomeDB" id="P0C6T2"/>
<dbReference type="BRENDA" id="2.4.99.18">
    <property type="organism ID" value="2681"/>
</dbReference>
<dbReference type="PathwayCommons" id="P0C6T2"/>
<dbReference type="SignaLink" id="P0C6T2"/>
<dbReference type="SIGNOR" id="P0C6T2"/>
<dbReference type="UniPathway" id="UPA00378"/>
<dbReference type="BioGRID-ORCS" id="100128731">
    <property type="hits" value="157 hits in 775 CRISPR screens"/>
</dbReference>
<dbReference type="ChiTaRS" id="OST4">
    <property type="organism name" value="human"/>
</dbReference>
<dbReference type="EvolutionaryTrace" id="P0C6T2"/>
<dbReference type="GenomeRNAi" id="100128731"/>
<dbReference type="Pharos" id="P0C6T2">
    <property type="development level" value="Tdark"/>
</dbReference>
<dbReference type="PRO" id="PR:P0C6T2"/>
<dbReference type="Proteomes" id="UP000005640">
    <property type="component" value="Chromosome 2"/>
</dbReference>
<dbReference type="Bgee" id="ENSG00000228474">
    <property type="expression patterns" value="Expressed in monocyte and 181 other cell types or tissues"/>
</dbReference>
<dbReference type="GO" id="GO:0005789">
    <property type="term" value="C:endoplasmic reticulum membrane"/>
    <property type="evidence" value="ECO:0000303"/>
    <property type="project" value="ComplexPortal"/>
</dbReference>
<dbReference type="GO" id="GO:0008250">
    <property type="term" value="C:oligosaccharyltransferase complex"/>
    <property type="evidence" value="ECO:0000314"/>
    <property type="project" value="UniProtKB"/>
</dbReference>
<dbReference type="GO" id="GO:0160226">
    <property type="term" value="C:oligosaccharyltransferase complex A"/>
    <property type="evidence" value="ECO:0000314"/>
    <property type="project" value="UniProtKB"/>
</dbReference>
<dbReference type="GO" id="GO:0160227">
    <property type="term" value="C:oligosaccharyltransferase complex B"/>
    <property type="evidence" value="ECO:0000314"/>
    <property type="project" value="UniProtKB"/>
</dbReference>
<dbReference type="GO" id="GO:0006487">
    <property type="term" value="P:protein N-linked glycosylation"/>
    <property type="evidence" value="ECO:0000303"/>
    <property type="project" value="ComplexPortal"/>
</dbReference>
<dbReference type="GO" id="GO:0018279">
    <property type="term" value="P:protein N-linked glycosylation via asparagine"/>
    <property type="evidence" value="ECO:0000315"/>
    <property type="project" value="UniProtKB"/>
</dbReference>
<dbReference type="InterPro" id="IPR018943">
    <property type="entry name" value="Oligosaccaryltransferase"/>
</dbReference>
<dbReference type="InterPro" id="IPR051307">
    <property type="entry name" value="OST4"/>
</dbReference>
<dbReference type="InterPro" id="IPR036330">
    <property type="entry name" value="Ost4p_sf"/>
</dbReference>
<dbReference type="PANTHER" id="PTHR48164">
    <property type="entry name" value="DOLICHYL-DIPHOSPHOOLIGOSACCHARIDE--PROTEIN GLYCOSYLTRANSFERASE SUBUNIT 4"/>
    <property type="match status" value="1"/>
</dbReference>
<dbReference type="PANTHER" id="PTHR48164:SF1">
    <property type="entry name" value="DOLICHYL-DIPHOSPHOOLIGOSACCHARIDE--PROTEIN GLYCOSYLTRANSFERASE SUBUNIT 4"/>
    <property type="match status" value="1"/>
</dbReference>
<dbReference type="Pfam" id="PF10215">
    <property type="entry name" value="Ost4"/>
    <property type="match status" value="1"/>
</dbReference>
<dbReference type="SUPFAM" id="SSF103464">
    <property type="entry name" value="Oligosaccharyltransferase subunit ost4p"/>
    <property type="match status" value="1"/>
</dbReference>
<evidence type="ECO:0000250" key="1">
    <source>
        <dbReference type="UniProtKB" id="P0CU66"/>
    </source>
</evidence>
<evidence type="ECO:0000255" key="2"/>
<evidence type="ECO:0000269" key="3">
    <source>
    </source>
</evidence>
<evidence type="ECO:0000269" key="4">
    <source>
    </source>
</evidence>
<evidence type="ECO:0000269" key="5">
    <source>
    </source>
</evidence>
<evidence type="ECO:0000269" key="6">
    <source>
    </source>
</evidence>
<evidence type="ECO:0000305" key="7"/>
<evidence type="ECO:0000305" key="8">
    <source>
    </source>
</evidence>
<evidence type="ECO:0000312" key="9">
    <source>
        <dbReference type="HGNC" id="HGNC:32483"/>
    </source>
</evidence>
<evidence type="ECO:0007744" key="10">
    <source>
        <dbReference type="PDB" id="6S7O"/>
    </source>
</evidence>
<evidence type="ECO:0007744" key="11">
    <source>
        <dbReference type="PDB" id="6S7T"/>
    </source>
</evidence>
<evidence type="ECO:0007744" key="12">
    <source>
        <dbReference type="PDB" id="8B6L"/>
    </source>
</evidence>
<evidence type="ECO:0007744" key="13">
    <source>
        <dbReference type="PDB" id="8PN9"/>
    </source>
</evidence>
<evidence type="ECO:0007829" key="14">
    <source>
        <dbReference type="PDB" id="6S7O"/>
    </source>
</evidence>
<organism>
    <name type="scientific">Homo sapiens</name>
    <name type="common">Human</name>
    <dbReference type="NCBI Taxonomy" id="9606"/>
    <lineage>
        <taxon>Eukaryota</taxon>
        <taxon>Metazoa</taxon>
        <taxon>Chordata</taxon>
        <taxon>Craniata</taxon>
        <taxon>Vertebrata</taxon>
        <taxon>Euteleostomi</taxon>
        <taxon>Mammalia</taxon>
        <taxon>Eutheria</taxon>
        <taxon>Euarchontoglires</taxon>
        <taxon>Primates</taxon>
        <taxon>Haplorrhini</taxon>
        <taxon>Catarrhini</taxon>
        <taxon>Hominidae</taxon>
        <taxon>Homo</taxon>
    </lineage>
</organism>